<dbReference type="EC" id="2.1.1.177" evidence="1"/>
<dbReference type="EMBL" id="AM233362">
    <property type="protein sequence ID" value="CAJ80158.1"/>
    <property type="molecule type" value="Genomic_DNA"/>
</dbReference>
<dbReference type="SMR" id="Q2A1Q2"/>
<dbReference type="KEGG" id="ftl:FTL_1719"/>
<dbReference type="Proteomes" id="UP000001944">
    <property type="component" value="Chromosome"/>
</dbReference>
<dbReference type="GO" id="GO:0005737">
    <property type="term" value="C:cytoplasm"/>
    <property type="evidence" value="ECO:0007669"/>
    <property type="project" value="UniProtKB-SubCell"/>
</dbReference>
<dbReference type="GO" id="GO:0070038">
    <property type="term" value="F:rRNA (pseudouridine-N3-)-methyltransferase activity"/>
    <property type="evidence" value="ECO:0007669"/>
    <property type="project" value="UniProtKB-UniRule"/>
</dbReference>
<dbReference type="CDD" id="cd18081">
    <property type="entry name" value="RlmH-like"/>
    <property type="match status" value="1"/>
</dbReference>
<dbReference type="Gene3D" id="3.40.1280.10">
    <property type="match status" value="1"/>
</dbReference>
<dbReference type="HAMAP" id="MF_00658">
    <property type="entry name" value="23SrRNA_methyltr_H"/>
    <property type="match status" value="1"/>
</dbReference>
<dbReference type="InterPro" id="IPR029028">
    <property type="entry name" value="Alpha/beta_knot_MTases"/>
</dbReference>
<dbReference type="InterPro" id="IPR003742">
    <property type="entry name" value="RlmH-like"/>
</dbReference>
<dbReference type="InterPro" id="IPR029026">
    <property type="entry name" value="tRNA_m1G_MTases_N"/>
</dbReference>
<dbReference type="NCBIfam" id="NF000986">
    <property type="entry name" value="PRK00103.1-4"/>
    <property type="match status" value="1"/>
</dbReference>
<dbReference type="PANTHER" id="PTHR33603">
    <property type="entry name" value="METHYLTRANSFERASE"/>
    <property type="match status" value="1"/>
</dbReference>
<dbReference type="PANTHER" id="PTHR33603:SF1">
    <property type="entry name" value="RIBOSOMAL RNA LARGE SUBUNIT METHYLTRANSFERASE H"/>
    <property type="match status" value="1"/>
</dbReference>
<dbReference type="Pfam" id="PF02590">
    <property type="entry name" value="SPOUT_MTase"/>
    <property type="match status" value="1"/>
</dbReference>
<dbReference type="PIRSF" id="PIRSF004505">
    <property type="entry name" value="MT_bac"/>
    <property type="match status" value="1"/>
</dbReference>
<dbReference type="SUPFAM" id="SSF75217">
    <property type="entry name" value="alpha/beta knot"/>
    <property type="match status" value="1"/>
</dbReference>
<keyword id="KW-0963">Cytoplasm</keyword>
<keyword id="KW-0489">Methyltransferase</keyword>
<keyword id="KW-1185">Reference proteome</keyword>
<keyword id="KW-0698">rRNA processing</keyword>
<keyword id="KW-0949">S-adenosyl-L-methionine</keyword>
<keyword id="KW-0808">Transferase</keyword>
<comment type="function">
    <text evidence="1">Specifically methylates the pseudouridine at position 1915 (m3Psi1915) in 23S rRNA.</text>
</comment>
<comment type="catalytic activity">
    <reaction evidence="1">
        <text>pseudouridine(1915) in 23S rRNA + S-adenosyl-L-methionine = N(3)-methylpseudouridine(1915) in 23S rRNA + S-adenosyl-L-homocysteine + H(+)</text>
        <dbReference type="Rhea" id="RHEA:42752"/>
        <dbReference type="Rhea" id="RHEA-COMP:10221"/>
        <dbReference type="Rhea" id="RHEA-COMP:10222"/>
        <dbReference type="ChEBI" id="CHEBI:15378"/>
        <dbReference type="ChEBI" id="CHEBI:57856"/>
        <dbReference type="ChEBI" id="CHEBI:59789"/>
        <dbReference type="ChEBI" id="CHEBI:65314"/>
        <dbReference type="ChEBI" id="CHEBI:74486"/>
        <dbReference type="EC" id="2.1.1.177"/>
    </reaction>
</comment>
<comment type="subunit">
    <text evidence="1">Homodimer.</text>
</comment>
<comment type="subcellular location">
    <subcellularLocation>
        <location evidence="1">Cytoplasm</location>
    </subcellularLocation>
</comment>
<comment type="similarity">
    <text evidence="1">Belongs to the RNA methyltransferase RlmH family.</text>
</comment>
<organism>
    <name type="scientific">Francisella tularensis subsp. holarctica (strain LVS)</name>
    <dbReference type="NCBI Taxonomy" id="376619"/>
    <lineage>
        <taxon>Bacteria</taxon>
        <taxon>Pseudomonadati</taxon>
        <taxon>Pseudomonadota</taxon>
        <taxon>Gammaproteobacteria</taxon>
        <taxon>Thiotrichales</taxon>
        <taxon>Francisellaceae</taxon>
        <taxon>Francisella</taxon>
    </lineage>
</organism>
<accession>Q2A1Q2</accession>
<proteinExistence type="inferred from homology"/>
<protein>
    <recommendedName>
        <fullName evidence="1">Ribosomal RNA large subunit methyltransferase H</fullName>
        <ecNumber evidence="1">2.1.1.177</ecNumber>
    </recommendedName>
    <alternativeName>
        <fullName evidence="1">23S rRNA (pseudouridine1915-N3)-methyltransferase</fullName>
    </alternativeName>
    <alternativeName>
        <fullName evidence="1">23S rRNA m3Psi1915 methyltransferase</fullName>
    </alternativeName>
    <alternativeName>
        <fullName evidence="1">rRNA (pseudouridine-N3-)-methyltransferase RlmH</fullName>
    </alternativeName>
</protein>
<gene>
    <name evidence="1" type="primary">rlmH</name>
    <name type="ordered locus">FTL_1719</name>
</gene>
<evidence type="ECO:0000255" key="1">
    <source>
        <dbReference type="HAMAP-Rule" id="MF_00658"/>
    </source>
</evidence>
<feature type="chain" id="PRO_0000260556" description="Ribosomal RNA large subunit methyltransferase H">
    <location>
        <begin position="1"/>
        <end position="166"/>
    </location>
</feature>
<feature type="binding site" evidence="1">
    <location>
        <position position="85"/>
    </location>
    <ligand>
        <name>S-adenosyl-L-methionine</name>
        <dbReference type="ChEBI" id="CHEBI:59789"/>
    </ligand>
</feature>
<feature type="binding site" evidence="1">
    <location>
        <position position="116"/>
    </location>
    <ligand>
        <name>S-adenosyl-L-methionine</name>
        <dbReference type="ChEBI" id="CHEBI:59789"/>
    </ligand>
</feature>
<feature type="binding site" evidence="1">
    <location>
        <begin position="135"/>
        <end position="140"/>
    </location>
    <ligand>
        <name>S-adenosyl-L-methionine</name>
        <dbReference type="ChEBI" id="CHEBI:59789"/>
    </ligand>
</feature>
<reference key="1">
    <citation type="submission" date="2006-03" db="EMBL/GenBank/DDBJ databases">
        <title>Complete genome sequence of Francisella tularensis LVS (Live Vaccine Strain).</title>
        <authorList>
            <person name="Chain P."/>
            <person name="Larimer F."/>
            <person name="Land M."/>
            <person name="Stilwagen S."/>
            <person name="Larsson P."/>
            <person name="Bearden S."/>
            <person name="Chu M."/>
            <person name="Oyston P."/>
            <person name="Forsman M."/>
            <person name="Andersson S."/>
            <person name="Lindler L."/>
            <person name="Titball R."/>
            <person name="Garcia E."/>
        </authorList>
    </citation>
    <scope>NUCLEOTIDE SEQUENCE [LARGE SCALE GENOMIC DNA]</scope>
    <source>
        <strain>LVS</strain>
    </source>
</reference>
<name>RLMH_FRATH</name>
<sequence>MMAFLLDIITFLQISFSTNIFRINYKWVSDGYDEYKKRLSKLIPLELIELPIAKRTKTGNPKLWMEQEAKTILGKLNDSDHLVILDVNSKIISTEELADKMQNWKFNNPNVVILIGGPDGIDQSIKDIAKEKISISKMTFPHPLVRIIAEQLYRAYTILEGHPYHK</sequence>